<reference key="1">
    <citation type="submission" date="2006-08" db="EMBL/GenBank/DDBJ databases">
        <title>Complete sequence of Alkalilimnicola ehrilichei MLHE-1.</title>
        <authorList>
            <person name="Copeland A."/>
            <person name="Lucas S."/>
            <person name="Lapidus A."/>
            <person name="Barry K."/>
            <person name="Detter J.C."/>
            <person name="Glavina del Rio T."/>
            <person name="Hammon N."/>
            <person name="Israni S."/>
            <person name="Dalin E."/>
            <person name="Tice H."/>
            <person name="Pitluck S."/>
            <person name="Sims D."/>
            <person name="Brettin T."/>
            <person name="Bruce D."/>
            <person name="Han C."/>
            <person name="Tapia R."/>
            <person name="Gilna P."/>
            <person name="Schmutz J."/>
            <person name="Larimer F."/>
            <person name="Land M."/>
            <person name="Hauser L."/>
            <person name="Kyrpides N."/>
            <person name="Mikhailova N."/>
            <person name="Oremland R.S."/>
            <person name="Hoeft S.E."/>
            <person name="Switzer-Blum J."/>
            <person name="Kulp T."/>
            <person name="King G."/>
            <person name="Tabita R."/>
            <person name="Witte B."/>
            <person name="Santini J.M."/>
            <person name="Basu P."/>
            <person name="Hollibaugh J.T."/>
            <person name="Xie G."/>
            <person name="Stolz J.F."/>
            <person name="Richardson P."/>
        </authorList>
    </citation>
    <scope>NUCLEOTIDE SEQUENCE [LARGE SCALE GENOMIC DNA]</scope>
    <source>
        <strain>ATCC BAA-1101 / DSM 17681 / MLHE-1</strain>
    </source>
</reference>
<evidence type="ECO:0000255" key="1">
    <source>
        <dbReference type="HAMAP-Rule" id="MF_00175"/>
    </source>
</evidence>
<evidence type="ECO:0000255" key="2">
    <source>
        <dbReference type="PROSITE-ProRule" id="PRU01250"/>
    </source>
</evidence>
<sequence>MTDKDNGRDDGGKLLYCSFCGKSQHEVRKLIAGPSVFVCDECVELCNDIIREELQEQSSSAGAGLPRPHEINQVLDEFVVGQEHAKKVLSVAVYNHYKRLEAGSRKDEVELSKSNILLIGPTGSGKTLLAETLARMLNVPFTIADATTLTEAGYVGEDVENIIQKLLQKCDYDVEKAQQGIVYIDEIDKVSRKADNPSITRDVSGEGVQQALLKLIEGTTASVPPQGGRKHPQQEFLQVDTGGILFICGGAFAGLDKVIQDRSEKGGIGFSAEIKSKDEKRSVGETLQDVEPEDLVKYGLIPEFVGRLPVVATLEELDEQALVEILSAPKNALVKQYQKLFEMEGVELEFREDALRAVARKAMDRKTGARGLRTILEHVLLDTMYDLPSMENVEKVVVDDAVIRGETRPYIIYGNQEQSRAASSD</sequence>
<name>CLPX_ALKEH</name>
<keyword id="KW-0067">ATP-binding</keyword>
<keyword id="KW-0143">Chaperone</keyword>
<keyword id="KW-0479">Metal-binding</keyword>
<keyword id="KW-0547">Nucleotide-binding</keyword>
<keyword id="KW-1185">Reference proteome</keyword>
<keyword id="KW-0862">Zinc</keyword>
<protein>
    <recommendedName>
        <fullName evidence="1">ATP-dependent Clp protease ATP-binding subunit ClpX</fullName>
    </recommendedName>
</protein>
<gene>
    <name evidence="1" type="primary">clpX</name>
    <name type="ordered locus">Mlg_2287</name>
</gene>
<feature type="chain" id="PRO_1000058331" description="ATP-dependent Clp protease ATP-binding subunit ClpX">
    <location>
        <begin position="1"/>
        <end position="425"/>
    </location>
</feature>
<feature type="domain" description="ClpX-type ZB" evidence="2">
    <location>
        <begin position="5"/>
        <end position="58"/>
    </location>
</feature>
<feature type="binding site" evidence="2">
    <location>
        <position position="17"/>
    </location>
    <ligand>
        <name>Zn(2+)</name>
        <dbReference type="ChEBI" id="CHEBI:29105"/>
    </ligand>
</feature>
<feature type="binding site" evidence="2">
    <location>
        <position position="20"/>
    </location>
    <ligand>
        <name>Zn(2+)</name>
        <dbReference type="ChEBI" id="CHEBI:29105"/>
    </ligand>
</feature>
<feature type="binding site" evidence="2">
    <location>
        <position position="39"/>
    </location>
    <ligand>
        <name>Zn(2+)</name>
        <dbReference type="ChEBI" id="CHEBI:29105"/>
    </ligand>
</feature>
<feature type="binding site" evidence="2">
    <location>
        <position position="42"/>
    </location>
    <ligand>
        <name>Zn(2+)</name>
        <dbReference type="ChEBI" id="CHEBI:29105"/>
    </ligand>
</feature>
<feature type="binding site" evidence="1">
    <location>
        <begin position="121"/>
        <end position="128"/>
    </location>
    <ligand>
        <name>ATP</name>
        <dbReference type="ChEBI" id="CHEBI:30616"/>
    </ligand>
</feature>
<proteinExistence type="inferred from homology"/>
<dbReference type="EMBL" id="CP000453">
    <property type="protein sequence ID" value="ABI57629.1"/>
    <property type="molecule type" value="Genomic_DNA"/>
</dbReference>
<dbReference type="RefSeq" id="WP_011630023.1">
    <property type="nucleotide sequence ID" value="NC_008340.1"/>
</dbReference>
<dbReference type="SMR" id="Q0A6A8"/>
<dbReference type="KEGG" id="aeh:Mlg_2287"/>
<dbReference type="eggNOG" id="COG1219">
    <property type="taxonomic scope" value="Bacteria"/>
</dbReference>
<dbReference type="HOGENOM" id="CLU_014218_8_2_6"/>
<dbReference type="OrthoDB" id="9804062at2"/>
<dbReference type="Proteomes" id="UP000001962">
    <property type="component" value="Chromosome"/>
</dbReference>
<dbReference type="GO" id="GO:0009376">
    <property type="term" value="C:HslUV protease complex"/>
    <property type="evidence" value="ECO:0007669"/>
    <property type="project" value="TreeGrafter"/>
</dbReference>
<dbReference type="GO" id="GO:0005524">
    <property type="term" value="F:ATP binding"/>
    <property type="evidence" value="ECO:0007669"/>
    <property type="project" value="UniProtKB-UniRule"/>
</dbReference>
<dbReference type="GO" id="GO:0016887">
    <property type="term" value="F:ATP hydrolysis activity"/>
    <property type="evidence" value="ECO:0007669"/>
    <property type="project" value="InterPro"/>
</dbReference>
<dbReference type="GO" id="GO:0140662">
    <property type="term" value="F:ATP-dependent protein folding chaperone"/>
    <property type="evidence" value="ECO:0007669"/>
    <property type="project" value="InterPro"/>
</dbReference>
<dbReference type="GO" id="GO:0046983">
    <property type="term" value="F:protein dimerization activity"/>
    <property type="evidence" value="ECO:0007669"/>
    <property type="project" value="InterPro"/>
</dbReference>
<dbReference type="GO" id="GO:0051082">
    <property type="term" value="F:unfolded protein binding"/>
    <property type="evidence" value="ECO:0007669"/>
    <property type="project" value="UniProtKB-UniRule"/>
</dbReference>
<dbReference type="GO" id="GO:0008270">
    <property type="term" value="F:zinc ion binding"/>
    <property type="evidence" value="ECO:0007669"/>
    <property type="project" value="InterPro"/>
</dbReference>
<dbReference type="GO" id="GO:0051301">
    <property type="term" value="P:cell division"/>
    <property type="evidence" value="ECO:0007669"/>
    <property type="project" value="TreeGrafter"/>
</dbReference>
<dbReference type="GO" id="GO:0051603">
    <property type="term" value="P:proteolysis involved in protein catabolic process"/>
    <property type="evidence" value="ECO:0007669"/>
    <property type="project" value="TreeGrafter"/>
</dbReference>
<dbReference type="CDD" id="cd19497">
    <property type="entry name" value="RecA-like_ClpX"/>
    <property type="match status" value="1"/>
</dbReference>
<dbReference type="FunFam" id="1.10.8.60:FF:000002">
    <property type="entry name" value="ATP-dependent Clp protease ATP-binding subunit ClpX"/>
    <property type="match status" value="1"/>
</dbReference>
<dbReference type="FunFam" id="3.40.50.300:FF:000005">
    <property type="entry name" value="ATP-dependent Clp protease ATP-binding subunit ClpX"/>
    <property type="match status" value="1"/>
</dbReference>
<dbReference type="Gene3D" id="1.10.8.60">
    <property type="match status" value="1"/>
</dbReference>
<dbReference type="Gene3D" id="6.20.220.10">
    <property type="entry name" value="ClpX chaperone, C4-type zinc finger domain"/>
    <property type="match status" value="1"/>
</dbReference>
<dbReference type="Gene3D" id="3.40.50.300">
    <property type="entry name" value="P-loop containing nucleotide triphosphate hydrolases"/>
    <property type="match status" value="1"/>
</dbReference>
<dbReference type="HAMAP" id="MF_00175">
    <property type="entry name" value="ClpX"/>
    <property type="match status" value="1"/>
</dbReference>
<dbReference type="InterPro" id="IPR003593">
    <property type="entry name" value="AAA+_ATPase"/>
</dbReference>
<dbReference type="InterPro" id="IPR050052">
    <property type="entry name" value="ATP-dep_Clp_protease_ClpX"/>
</dbReference>
<dbReference type="InterPro" id="IPR003959">
    <property type="entry name" value="ATPase_AAA_core"/>
</dbReference>
<dbReference type="InterPro" id="IPR019489">
    <property type="entry name" value="Clp_ATPase_C"/>
</dbReference>
<dbReference type="InterPro" id="IPR004487">
    <property type="entry name" value="Clp_protease_ATP-bd_su_ClpX"/>
</dbReference>
<dbReference type="InterPro" id="IPR046425">
    <property type="entry name" value="ClpX_bact"/>
</dbReference>
<dbReference type="InterPro" id="IPR027417">
    <property type="entry name" value="P-loop_NTPase"/>
</dbReference>
<dbReference type="InterPro" id="IPR010603">
    <property type="entry name" value="Znf_CppX_C4"/>
</dbReference>
<dbReference type="InterPro" id="IPR038366">
    <property type="entry name" value="Znf_CppX_C4_sf"/>
</dbReference>
<dbReference type="NCBIfam" id="TIGR00382">
    <property type="entry name" value="clpX"/>
    <property type="match status" value="1"/>
</dbReference>
<dbReference type="NCBIfam" id="NF003745">
    <property type="entry name" value="PRK05342.1"/>
    <property type="match status" value="1"/>
</dbReference>
<dbReference type="PANTHER" id="PTHR48102:SF7">
    <property type="entry name" value="ATP-DEPENDENT CLP PROTEASE ATP-BINDING SUBUNIT CLPX-LIKE, MITOCHONDRIAL"/>
    <property type="match status" value="1"/>
</dbReference>
<dbReference type="PANTHER" id="PTHR48102">
    <property type="entry name" value="ATP-DEPENDENT CLP PROTEASE ATP-BINDING SUBUNIT CLPX-LIKE, MITOCHONDRIAL-RELATED"/>
    <property type="match status" value="1"/>
</dbReference>
<dbReference type="Pfam" id="PF07724">
    <property type="entry name" value="AAA_2"/>
    <property type="match status" value="1"/>
</dbReference>
<dbReference type="Pfam" id="PF10431">
    <property type="entry name" value="ClpB_D2-small"/>
    <property type="match status" value="1"/>
</dbReference>
<dbReference type="Pfam" id="PF06689">
    <property type="entry name" value="zf-C4_ClpX"/>
    <property type="match status" value="1"/>
</dbReference>
<dbReference type="SMART" id="SM00382">
    <property type="entry name" value="AAA"/>
    <property type="match status" value="1"/>
</dbReference>
<dbReference type="SMART" id="SM01086">
    <property type="entry name" value="ClpB_D2-small"/>
    <property type="match status" value="1"/>
</dbReference>
<dbReference type="SMART" id="SM00994">
    <property type="entry name" value="zf-C4_ClpX"/>
    <property type="match status" value="1"/>
</dbReference>
<dbReference type="SUPFAM" id="SSF57716">
    <property type="entry name" value="Glucocorticoid receptor-like (DNA-binding domain)"/>
    <property type="match status" value="1"/>
</dbReference>
<dbReference type="SUPFAM" id="SSF52540">
    <property type="entry name" value="P-loop containing nucleoside triphosphate hydrolases"/>
    <property type="match status" value="1"/>
</dbReference>
<dbReference type="PROSITE" id="PS51902">
    <property type="entry name" value="CLPX_ZB"/>
    <property type="match status" value="1"/>
</dbReference>
<comment type="function">
    <text evidence="1">ATP-dependent specificity component of the Clp protease. It directs the protease to specific substrates. Can perform chaperone functions in the absence of ClpP.</text>
</comment>
<comment type="subunit">
    <text evidence="1">Component of the ClpX-ClpP complex. Forms a hexameric ring that, in the presence of ATP, binds to fourteen ClpP subunits assembled into a disk-like structure with a central cavity, resembling the structure of eukaryotic proteasomes.</text>
</comment>
<comment type="similarity">
    <text evidence="1">Belongs to the ClpX chaperone family.</text>
</comment>
<accession>Q0A6A8</accession>
<organism>
    <name type="scientific">Alkalilimnicola ehrlichii (strain ATCC BAA-1101 / DSM 17681 / MLHE-1)</name>
    <dbReference type="NCBI Taxonomy" id="187272"/>
    <lineage>
        <taxon>Bacteria</taxon>
        <taxon>Pseudomonadati</taxon>
        <taxon>Pseudomonadota</taxon>
        <taxon>Gammaproteobacteria</taxon>
        <taxon>Chromatiales</taxon>
        <taxon>Ectothiorhodospiraceae</taxon>
        <taxon>Alkalilimnicola</taxon>
    </lineage>
</organism>